<comment type="function">
    <text evidence="1">Functions in complex with FlhC as a master transcriptional regulator that regulates transcription of several flagellar and non-flagellar operons by binding to their promoter region. Activates expression of class 2 flagellar genes, including fliA, which is a flagellum-specific sigma factor that turns on the class 3 genes. Also regulates genes whose products function in a variety of physiological pathways.</text>
</comment>
<comment type="subunit">
    <text evidence="1">Homodimer; disulfide-linked. Forms a heterohexamer composed of two FlhC and four FlhD subunits. Each FlhC binds a FlhD dimer, forming a heterotrimer, and a hexamer assembles by dimerization of two heterotrimers.</text>
</comment>
<comment type="subcellular location">
    <subcellularLocation>
        <location evidence="1">Cytoplasm</location>
    </subcellularLocation>
</comment>
<comment type="domain">
    <text evidence="1">The C-terminal region contains a putative helix-turn-helix (HTH) motif, suggesting that this region may bind DNA.</text>
</comment>
<comment type="similarity">
    <text evidence="1">Belongs to the FlhD family.</text>
</comment>
<proteinExistence type="inferred from homology"/>
<gene>
    <name evidence="1" type="primary">flhD</name>
    <name type="ordered locus">ECED1_2160</name>
</gene>
<sequence>MGIMHTSELLKHIYDINLSYLLLAQRLIVQDKASAMFRLGINEEMATTLAALTLPQMVKLAETNQLVCHFRFDSHQTITQLTQDSRVDDLQQIHTGIMLSTRLLNDVNQPEEALRKKRA</sequence>
<keyword id="KW-0010">Activator</keyword>
<keyword id="KW-1005">Bacterial flagellum biogenesis</keyword>
<keyword id="KW-0963">Cytoplasm</keyword>
<keyword id="KW-1015">Disulfide bond</keyword>
<keyword id="KW-0238">DNA-binding</keyword>
<keyword id="KW-0804">Transcription</keyword>
<keyword id="KW-0805">Transcription regulation</keyword>
<protein>
    <recommendedName>
        <fullName evidence="1">Flagellar transcriptional regulator FlhD</fullName>
    </recommendedName>
</protein>
<name>FLHD_ECO81</name>
<dbReference type="EMBL" id="CU928162">
    <property type="protein sequence ID" value="CAR08349.2"/>
    <property type="molecule type" value="Genomic_DNA"/>
</dbReference>
<dbReference type="SMR" id="B7MW83"/>
<dbReference type="KEGG" id="ecq:ECED1_2160"/>
<dbReference type="HOGENOM" id="CLU_144160_0_0_6"/>
<dbReference type="Proteomes" id="UP000000748">
    <property type="component" value="Chromosome"/>
</dbReference>
<dbReference type="GO" id="GO:0005737">
    <property type="term" value="C:cytoplasm"/>
    <property type="evidence" value="ECO:0007669"/>
    <property type="project" value="UniProtKB-SubCell"/>
</dbReference>
<dbReference type="GO" id="GO:0003677">
    <property type="term" value="F:DNA binding"/>
    <property type="evidence" value="ECO:0007669"/>
    <property type="project" value="UniProtKB-UniRule"/>
</dbReference>
<dbReference type="GO" id="GO:0044780">
    <property type="term" value="P:bacterial-type flagellum assembly"/>
    <property type="evidence" value="ECO:0007669"/>
    <property type="project" value="InterPro"/>
</dbReference>
<dbReference type="GO" id="GO:0045893">
    <property type="term" value="P:positive regulation of DNA-templated transcription"/>
    <property type="evidence" value="ECO:0007669"/>
    <property type="project" value="InterPro"/>
</dbReference>
<dbReference type="GO" id="GO:1902208">
    <property type="term" value="P:regulation of bacterial-type flagellum assembly"/>
    <property type="evidence" value="ECO:0007669"/>
    <property type="project" value="UniProtKB-UniRule"/>
</dbReference>
<dbReference type="FunFam" id="1.10.4000.10:FF:000001">
    <property type="entry name" value="Flagellar transcriptional regulator FlhD"/>
    <property type="match status" value="1"/>
</dbReference>
<dbReference type="Gene3D" id="1.10.4000.10">
    <property type="entry name" value="Flagellar transcriptional activator FlhD"/>
    <property type="match status" value="1"/>
</dbReference>
<dbReference type="HAMAP" id="MF_00725">
    <property type="entry name" value="FlhD"/>
    <property type="match status" value="1"/>
</dbReference>
<dbReference type="InterPro" id="IPR023559">
    <property type="entry name" value="Flagellar_FlhD"/>
</dbReference>
<dbReference type="InterPro" id="IPR036194">
    <property type="entry name" value="FlhD_sf"/>
</dbReference>
<dbReference type="NCBIfam" id="NF002783">
    <property type="entry name" value="PRK02909.1-1"/>
    <property type="match status" value="1"/>
</dbReference>
<dbReference type="Pfam" id="PF05247">
    <property type="entry name" value="FlhD"/>
    <property type="match status" value="1"/>
</dbReference>
<dbReference type="SUPFAM" id="SSF63592">
    <property type="entry name" value="Flagellar transcriptional activator FlhD"/>
    <property type="match status" value="1"/>
</dbReference>
<accession>B7MW83</accession>
<evidence type="ECO:0000255" key="1">
    <source>
        <dbReference type="HAMAP-Rule" id="MF_00725"/>
    </source>
</evidence>
<feature type="chain" id="PRO_1000148057" description="Flagellar transcriptional regulator FlhD">
    <location>
        <begin position="1"/>
        <end position="119"/>
    </location>
</feature>
<feature type="disulfide bond" description="Interchain" evidence="1">
    <location>
        <position position="68"/>
    </location>
</feature>
<organism>
    <name type="scientific">Escherichia coli O81 (strain ED1a)</name>
    <dbReference type="NCBI Taxonomy" id="585397"/>
    <lineage>
        <taxon>Bacteria</taxon>
        <taxon>Pseudomonadati</taxon>
        <taxon>Pseudomonadota</taxon>
        <taxon>Gammaproteobacteria</taxon>
        <taxon>Enterobacterales</taxon>
        <taxon>Enterobacteriaceae</taxon>
        <taxon>Escherichia</taxon>
    </lineage>
</organism>
<reference key="1">
    <citation type="journal article" date="2009" name="PLoS Genet.">
        <title>Organised genome dynamics in the Escherichia coli species results in highly diverse adaptive paths.</title>
        <authorList>
            <person name="Touchon M."/>
            <person name="Hoede C."/>
            <person name="Tenaillon O."/>
            <person name="Barbe V."/>
            <person name="Baeriswyl S."/>
            <person name="Bidet P."/>
            <person name="Bingen E."/>
            <person name="Bonacorsi S."/>
            <person name="Bouchier C."/>
            <person name="Bouvet O."/>
            <person name="Calteau A."/>
            <person name="Chiapello H."/>
            <person name="Clermont O."/>
            <person name="Cruveiller S."/>
            <person name="Danchin A."/>
            <person name="Diard M."/>
            <person name="Dossat C."/>
            <person name="Karoui M.E."/>
            <person name="Frapy E."/>
            <person name="Garry L."/>
            <person name="Ghigo J.M."/>
            <person name="Gilles A.M."/>
            <person name="Johnson J."/>
            <person name="Le Bouguenec C."/>
            <person name="Lescat M."/>
            <person name="Mangenot S."/>
            <person name="Martinez-Jehanne V."/>
            <person name="Matic I."/>
            <person name="Nassif X."/>
            <person name="Oztas S."/>
            <person name="Petit M.A."/>
            <person name="Pichon C."/>
            <person name="Rouy Z."/>
            <person name="Ruf C.S."/>
            <person name="Schneider D."/>
            <person name="Tourret J."/>
            <person name="Vacherie B."/>
            <person name="Vallenet D."/>
            <person name="Medigue C."/>
            <person name="Rocha E.P.C."/>
            <person name="Denamur E."/>
        </authorList>
    </citation>
    <scope>NUCLEOTIDE SEQUENCE [LARGE SCALE GENOMIC DNA]</scope>
    <source>
        <strain>ED1a</strain>
    </source>
</reference>